<accession>A6QJR4</accession>
<protein>
    <recommendedName>
        <fullName evidence="1">Biotin synthase</fullName>
        <ecNumber evidence="1">2.8.1.6</ecNumber>
    </recommendedName>
</protein>
<gene>
    <name evidence="1" type="primary">bioB</name>
    <name type="ordered locus">NWMN_2324</name>
</gene>
<organism>
    <name type="scientific">Staphylococcus aureus (strain Newman)</name>
    <dbReference type="NCBI Taxonomy" id="426430"/>
    <lineage>
        <taxon>Bacteria</taxon>
        <taxon>Bacillati</taxon>
        <taxon>Bacillota</taxon>
        <taxon>Bacilli</taxon>
        <taxon>Bacillales</taxon>
        <taxon>Staphylococcaceae</taxon>
        <taxon>Staphylococcus</taxon>
    </lineage>
</organism>
<dbReference type="EC" id="2.8.1.6" evidence="1"/>
<dbReference type="EMBL" id="AP009351">
    <property type="protein sequence ID" value="BAF68596.1"/>
    <property type="molecule type" value="Genomic_DNA"/>
</dbReference>
<dbReference type="RefSeq" id="WP_001046646.1">
    <property type="nucleotide sequence ID" value="NZ_JBBIAE010000004.1"/>
</dbReference>
<dbReference type="SMR" id="A6QJR4"/>
<dbReference type="KEGG" id="sae:NWMN_2324"/>
<dbReference type="HOGENOM" id="CLU_033172_2_1_9"/>
<dbReference type="UniPathway" id="UPA00078">
    <property type="reaction ID" value="UER00162"/>
</dbReference>
<dbReference type="Proteomes" id="UP000006386">
    <property type="component" value="Chromosome"/>
</dbReference>
<dbReference type="GO" id="GO:0051537">
    <property type="term" value="F:2 iron, 2 sulfur cluster binding"/>
    <property type="evidence" value="ECO:0007669"/>
    <property type="project" value="UniProtKB-KW"/>
</dbReference>
<dbReference type="GO" id="GO:0051539">
    <property type="term" value="F:4 iron, 4 sulfur cluster binding"/>
    <property type="evidence" value="ECO:0007669"/>
    <property type="project" value="UniProtKB-KW"/>
</dbReference>
<dbReference type="GO" id="GO:0004076">
    <property type="term" value="F:biotin synthase activity"/>
    <property type="evidence" value="ECO:0007669"/>
    <property type="project" value="UniProtKB-UniRule"/>
</dbReference>
<dbReference type="GO" id="GO:0005506">
    <property type="term" value="F:iron ion binding"/>
    <property type="evidence" value="ECO:0007669"/>
    <property type="project" value="UniProtKB-UniRule"/>
</dbReference>
<dbReference type="GO" id="GO:0009102">
    <property type="term" value="P:biotin biosynthetic process"/>
    <property type="evidence" value="ECO:0007669"/>
    <property type="project" value="UniProtKB-UniRule"/>
</dbReference>
<dbReference type="CDD" id="cd01335">
    <property type="entry name" value="Radical_SAM"/>
    <property type="match status" value="1"/>
</dbReference>
<dbReference type="FunFam" id="3.20.20.70:FF:000026">
    <property type="entry name" value="Biotin synthase"/>
    <property type="match status" value="1"/>
</dbReference>
<dbReference type="Gene3D" id="3.20.20.70">
    <property type="entry name" value="Aldolase class I"/>
    <property type="match status" value="1"/>
</dbReference>
<dbReference type="HAMAP" id="MF_01694">
    <property type="entry name" value="BioB"/>
    <property type="match status" value="1"/>
</dbReference>
<dbReference type="InterPro" id="IPR013785">
    <property type="entry name" value="Aldolase_TIM"/>
</dbReference>
<dbReference type="InterPro" id="IPR010722">
    <property type="entry name" value="BATS_dom"/>
</dbReference>
<dbReference type="InterPro" id="IPR002684">
    <property type="entry name" value="Biotin_synth/BioAB"/>
</dbReference>
<dbReference type="InterPro" id="IPR024177">
    <property type="entry name" value="Biotin_synthase"/>
</dbReference>
<dbReference type="InterPro" id="IPR006638">
    <property type="entry name" value="Elp3/MiaA/NifB-like_rSAM"/>
</dbReference>
<dbReference type="InterPro" id="IPR007197">
    <property type="entry name" value="rSAM"/>
</dbReference>
<dbReference type="NCBIfam" id="TIGR00433">
    <property type="entry name" value="bioB"/>
    <property type="match status" value="1"/>
</dbReference>
<dbReference type="PANTHER" id="PTHR22976">
    <property type="entry name" value="BIOTIN SYNTHASE"/>
    <property type="match status" value="1"/>
</dbReference>
<dbReference type="PANTHER" id="PTHR22976:SF2">
    <property type="entry name" value="BIOTIN SYNTHASE, MITOCHONDRIAL"/>
    <property type="match status" value="1"/>
</dbReference>
<dbReference type="Pfam" id="PF06968">
    <property type="entry name" value="BATS"/>
    <property type="match status" value="1"/>
</dbReference>
<dbReference type="Pfam" id="PF04055">
    <property type="entry name" value="Radical_SAM"/>
    <property type="match status" value="1"/>
</dbReference>
<dbReference type="PIRSF" id="PIRSF001619">
    <property type="entry name" value="Biotin_synth"/>
    <property type="match status" value="1"/>
</dbReference>
<dbReference type="SFLD" id="SFLDG01060">
    <property type="entry name" value="BATS_domain_containing"/>
    <property type="match status" value="1"/>
</dbReference>
<dbReference type="SFLD" id="SFLDG01278">
    <property type="entry name" value="biotin_synthase_like"/>
    <property type="match status" value="1"/>
</dbReference>
<dbReference type="SMART" id="SM00876">
    <property type="entry name" value="BATS"/>
    <property type="match status" value="1"/>
</dbReference>
<dbReference type="SMART" id="SM00729">
    <property type="entry name" value="Elp3"/>
    <property type="match status" value="1"/>
</dbReference>
<dbReference type="SUPFAM" id="SSF102114">
    <property type="entry name" value="Radical SAM enzymes"/>
    <property type="match status" value="1"/>
</dbReference>
<dbReference type="PROSITE" id="PS51918">
    <property type="entry name" value="RADICAL_SAM"/>
    <property type="match status" value="1"/>
</dbReference>
<evidence type="ECO:0000255" key="1">
    <source>
        <dbReference type="HAMAP-Rule" id="MF_01694"/>
    </source>
</evidence>
<evidence type="ECO:0000255" key="2">
    <source>
        <dbReference type="PROSITE-ProRule" id="PRU01266"/>
    </source>
</evidence>
<name>BIOB_STAAE</name>
<keyword id="KW-0001">2Fe-2S</keyword>
<keyword id="KW-0004">4Fe-4S</keyword>
<keyword id="KW-0093">Biotin biosynthesis</keyword>
<keyword id="KW-0408">Iron</keyword>
<keyword id="KW-0411">Iron-sulfur</keyword>
<keyword id="KW-0479">Metal-binding</keyword>
<keyword id="KW-0949">S-adenosyl-L-methionine</keyword>
<keyword id="KW-0808">Transferase</keyword>
<feature type="chain" id="PRO_0000381649" description="Biotin synthase">
    <location>
        <begin position="1"/>
        <end position="335"/>
    </location>
</feature>
<feature type="domain" description="Radical SAM core" evidence="2">
    <location>
        <begin position="43"/>
        <end position="269"/>
    </location>
</feature>
<feature type="binding site" evidence="1">
    <location>
        <position position="61"/>
    </location>
    <ligand>
        <name>[4Fe-4S] cluster</name>
        <dbReference type="ChEBI" id="CHEBI:49883"/>
        <note>4Fe-4S-S-AdoMet</note>
    </ligand>
</feature>
<feature type="binding site" evidence="1">
    <location>
        <position position="65"/>
    </location>
    <ligand>
        <name>[4Fe-4S] cluster</name>
        <dbReference type="ChEBI" id="CHEBI:49883"/>
        <note>4Fe-4S-S-AdoMet</note>
    </ligand>
</feature>
<feature type="binding site" evidence="1">
    <location>
        <position position="68"/>
    </location>
    <ligand>
        <name>[4Fe-4S] cluster</name>
        <dbReference type="ChEBI" id="CHEBI:49883"/>
        <note>4Fe-4S-S-AdoMet</note>
    </ligand>
</feature>
<feature type="binding site" evidence="1">
    <location>
        <position position="104"/>
    </location>
    <ligand>
        <name>[2Fe-2S] cluster</name>
        <dbReference type="ChEBI" id="CHEBI:190135"/>
    </ligand>
</feature>
<feature type="binding site" evidence="1">
    <location>
        <position position="137"/>
    </location>
    <ligand>
        <name>[2Fe-2S] cluster</name>
        <dbReference type="ChEBI" id="CHEBI:190135"/>
    </ligand>
</feature>
<feature type="binding site" evidence="1">
    <location>
        <position position="197"/>
    </location>
    <ligand>
        <name>[2Fe-2S] cluster</name>
        <dbReference type="ChEBI" id="CHEBI:190135"/>
    </ligand>
</feature>
<feature type="binding site" evidence="1">
    <location>
        <position position="267"/>
    </location>
    <ligand>
        <name>[2Fe-2S] cluster</name>
        <dbReference type="ChEBI" id="CHEBI:190135"/>
    </ligand>
</feature>
<proteinExistence type="inferred from homology"/>
<reference key="1">
    <citation type="journal article" date="2008" name="J. Bacteriol.">
        <title>Genome sequence of Staphylococcus aureus strain Newman and comparative analysis of staphylococcal genomes: polymorphism and evolution of two major pathogenicity islands.</title>
        <authorList>
            <person name="Baba T."/>
            <person name="Bae T."/>
            <person name="Schneewind O."/>
            <person name="Takeuchi F."/>
            <person name="Hiramatsu K."/>
        </authorList>
    </citation>
    <scope>NUCLEOTIDE SEQUENCE [LARGE SCALE GENOMIC DNA]</scope>
    <source>
        <strain>Newman</strain>
    </source>
</reference>
<sequence length="335" mass="37559">MNLAKRILQGEQLTKETVLKIYEDTNIDTLDLLNEAYILRKHYFGKKVKLNMILNAKSGICPENCGYCGQSRDIKQKQRYALIPEEQIIDGAKVAHDNHIGTYCIVMSGRGPSDKEVDHISNTVRTIKSQHPQLKICACLGLTNDEQAKKLKSAGVDRYNHNINTSENYHDNVVTTHSYKDRTDTIELMKANNISPCSGVICGMGESNQDIVDMAFALKEMDADSIPINFLHPIKGTKFGSMDDLTPMKCLRIVALFRLINPTKEIRIAGGREVNLRSLQPLALKAANSIFVGDYLITGGQPNQLDYDMINDLGFEIDYDTCENKENKNEVSRAN</sequence>
<comment type="function">
    <text evidence="1">Catalyzes the conversion of dethiobiotin (DTB) to biotin by the insertion of a sulfur atom into dethiobiotin via a radical-based mechanism.</text>
</comment>
<comment type="catalytic activity">
    <reaction evidence="1">
        <text>(4R,5S)-dethiobiotin + (sulfur carrier)-SH + 2 reduced [2Fe-2S]-[ferredoxin] + 2 S-adenosyl-L-methionine = (sulfur carrier)-H + biotin + 2 5'-deoxyadenosine + 2 L-methionine + 2 oxidized [2Fe-2S]-[ferredoxin]</text>
        <dbReference type="Rhea" id="RHEA:22060"/>
        <dbReference type="Rhea" id="RHEA-COMP:10000"/>
        <dbReference type="Rhea" id="RHEA-COMP:10001"/>
        <dbReference type="Rhea" id="RHEA-COMP:14737"/>
        <dbReference type="Rhea" id="RHEA-COMP:14739"/>
        <dbReference type="ChEBI" id="CHEBI:17319"/>
        <dbReference type="ChEBI" id="CHEBI:29917"/>
        <dbReference type="ChEBI" id="CHEBI:33737"/>
        <dbReference type="ChEBI" id="CHEBI:33738"/>
        <dbReference type="ChEBI" id="CHEBI:57586"/>
        <dbReference type="ChEBI" id="CHEBI:57844"/>
        <dbReference type="ChEBI" id="CHEBI:59789"/>
        <dbReference type="ChEBI" id="CHEBI:64428"/>
        <dbReference type="ChEBI" id="CHEBI:149473"/>
        <dbReference type="EC" id="2.8.1.6"/>
    </reaction>
</comment>
<comment type="cofactor">
    <cofactor evidence="1">
        <name>[4Fe-4S] cluster</name>
        <dbReference type="ChEBI" id="CHEBI:49883"/>
    </cofactor>
    <text evidence="1">Binds 1 [4Fe-4S] cluster. The cluster is coordinated with 3 cysteines and an exchangeable S-adenosyl-L-methionine.</text>
</comment>
<comment type="cofactor">
    <cofactor evidence="1">
        <name>[2Fe-2S] cluster</name>
        <dbReference type="ChEBI" id="CHEBI:190135"/>
    </cofactor>
    <text evidence="1">Binds 1 [2Fe-2S] cluster. The cluster is coordinated with 3 cysteines and 1 arginine.</text>
</comment>
<comment type="pathway">
    <text evidence="1">Cofactor biosynthesis; biotin biosynthesis; biotin from 7,8-diaminononanoate: step 2/2.</text>
</comment>
<comment type="subunit">
    <text evidence="1">Homodimer.</text>
</comment>
<comment type="similarity">
    <text evidence="1">Belongs to the radical SAM superfamily. Biotin synthase family.</text>
</comment>